<name>AMPO_HUMAN</name>
<keyword id="KW-0025">Alternative splicing</keyword>
<keyword id="KW-0031">Aminopeptidase</keyword>
<keyword id="KW-0963">Cytoplasm</keyword>
<keyword id="KW-0225">Disease variant</keyword>
<keyword id="KW-1023">Dystonia</keyword>
<keyword id="KW-0378">Hydrolase</keyword>
<keyword id="KW-0479">Metal-binding</keyword>
<keyword id="KW-0482">Metalloprotease</keyword>
<keyword id="KW-0539">Nucleus</keyword>
<keyword id="KW-0645">Protease</keyword>
<keyword id="KW-1267">Proteomics identification</keyword>
<keyword id="KW-1185">Reference proteome</keyword>
<keyword id="KW-0862">Zinc</keyword>
<comment type="function">
    <text evidence="1">Aminopeptidase which catalyzes the hydrolysis of amino acid residues from the N-terminus of peptide or protein substrates.</text>
</comment>
<comment type="cofactor">
    <cofactor evidence="1">
        <name>Zn(2+)</name>
        <dbReference type="ChEBI" id="CHEBI:29105"/>
    </cofactor>
    <text evidence="1">Binds 1 zinc ion per subunit.</text>
</comment>
<comment type="subcellular location">
    <subcellularLocation>
        <location evidence="2">Nucleus</location>
        <location evidence="2">Nucleolus</location>
    </subcellularLocation>
</comment>
<comment type="subcellular location">
    <molecule>Isoform 3</molecule>
    <subcellularLocation>
        <location evidence="2">Cytoplasm</location>
    </subcellularLocation>
</comment>
<comment type="alternative products">
    <event type="alternative splicing"/>
    <isoform>
        <id>Q8N6M6-1</id>
        <name>1</name>
        <sequence type="displayed"/>
    </isoform>
    <isoform>
        <id>Q8N6M6-2</id>
        <name>2</name>
        <sequence type="described" ref="VSP_013161"/>
    </isoform>
    <isoform>
        <id>Q8N6M6-3</id>
        <name>3</name>
        <sequence type="described" ref="VSP_013162 VSP_013163"/>
    </isoform>
    <isoform>
        <id>Q8N6M6-4</id>
        <name>4</name>
        <sequence type="described" ref="VSP_013161 VSP_013164 VSP_013165"/>
    </isoform>
</comment>
<comment type="disease" evidence="4">
    <disease id="DI-06261">
        <name>Dystonia 31</name>
        <acronym>DYT31</acronym>
        <description>A form of dystonia, a disorder defined by the presence of sustained involuntary muscle contraction, often leading to abnormal postures. DYT31 is an autosomal recessive, progressive form with onset from childhood to young adulthood. Involuntary muscle twisting movements and postural abnormalities affect the upper and lower limbs, neck, face, and trunk. Some patients may have orofacial dyskinesia resulting in articulation and swallowing difficulties.</description>
        <dbReference type="MIM" id="619565"/>
    </disease>
    <text>The disease is caused by variants affecting the gene represented in this entry.</text>
</comment>
<comment type="similarity">
    <text evidence="7">Belongs to the peptidase M1 family.</text>
</comment>
<comment type="caution">
    <text evidence="8 9">A paper describing the function, enzyme activity and expression patterns of this protein has been retracted due to concerns of image manipulation.</text>
</comment>
<comment type="sequence caution" evidence="7">
    <conflict type="erroneous initiation">
        <sequence resource="EMBL-CDS" id="AAH20194"/>
    </conflict>
    <text>Truncated N-terminus.</text>
</comment>
<comment type="sequence caution" evidence="7">
    <conflict type="erroneous initiation">
        <sequence resource="EMBL-CDS" id="BAB55210"/>
    </conflict>
    <text>Truncated N-terminus.</text>
</comment>
<organism>
    <name type="scientific">Homo sapiens</name>
    <name type="common">Human</name>
    <dbReference type="NCBI Taxonomy" id="9606"/>
    <lineage>
        <taxon>Eukaryota</taxon>
        <taxon>Metazoa</taxon>
        <taxon>Chordata</taxon>
        <taxon>Craniata</taxon>
        <taxon>Vertebrata</taxon>
        <taxon>Euteleostomi</taxon>
        <taxon>Mammalia</taxon>
        <taxon>Eutheria</taxon>
        <taxon>Euarchontoglires</taxon>
        <taxon>Primates</taxon>
        <taxon>Haplorrhini</taxon>
        <taxon>Catarrhini</taxon>
        <taxon>Hominidae</taxon>
        <taxon>Homo</taxon>
    </lineage>
</organism>
<feature type="chain" id="PRO_0000095091" description="Aminopeptidase O">
    <location>
        <begin position="1"/>
        <end position="819"/>
    </location>
</feature>
<feature type="short sequence motif" description="Nucleolar localization signal" evidence="2">
    <location>
        <begin position="689"/>
        <end position="699"/>
    </location>
</feature>
<feature type="active site" description="Proton acceptor" evidence="1 3">
    <location>
        <position position="480"/>
    </location>
</feature>
<feature type="binding site" evidence="1">
    <location>
        <position position="479"/>
    </location>
    <ligand>
        <name>Zn(2+)</name>
        <dbReference type="ChEBI" id="CHEBI:29105"/>
        <note>catalytic</note>
    </ligand>
</feature>
<feature type="binding site" evidence="1">
    <location>
        <position position="483"/>
    </location>
    <ligand>
        <name>Zn(2+)</name>
        <dbReference type="ChEBI" id="CHEBI:29105"/>
        <note>catalytic</note>
    </ligand>
</feature>
<feature type="binding site" evidence="1">
    <location>
        <position position="502"/>
    </location>
    <ligand>
        <name>Zn(2+)</name>
        <dbReference type="ChEBI" id="CHEBI:29105"/>
        <note>catalytic</note>
    </ligand>
</feature>
<feature type="site" description="Transition state stabilizer" evidence="1">
    <location>
        <position position="586"/>
    </location>
</feature>
<feature type="splice variant" id="VSP_013161" description="In isoform 2 and isoform 4." evidence="5 6">
    <location>
        <begin position="455"/>
        <end position="553"/>
    </location>
</feature>
<feature type="splice variant" id="VSP_013162" description="In isoform 3." evidence="5">
    <original>PSKDKTGHTSD</original>
    <variation>FPHVGGCSGSFS</variation>
    <location>
        <begin position="555"/>
        <end position="565"/>
    </location>
</feature>
<feature type="splice variant" id="VSP_013163" description="In isoform 3." evidence="5">
    <location>
        <begin position="566"/>
        <end position="819"/>
    </location>
</feature>
<feature type="splice variant" id="VSP_013164" description="In isoform 4." evidence="5">
    <original>AMGVYLYGELM</original>
    <variation>VGVIFQQMGIL</variation>
    <location>
        <begin position="774"/>
        <end position="784"/>
    </location>
</feature>
<feature type="splice variant" id="VSP_013165" description="In isoform 4." evidence="5">
    <location>
        <begin position="785"/>
        <end position="819"/>
    </location>
</feature>
<feature type="sequence variant" id="VAR_021511" description="In dbSNP:rs16911679.">
    <original>V</original>
    <variation>A</variation>
    <location>
        <position position="179"/>
    </location>
</feature>
<feature type="sequence variant" id="VAR_057053" description="In dbSNP:rs16911679.">
    <original>V</original>
    <variation>I</variation>
    <location>
        <position position="179"/>
    </location>
</feature>
<feature type="sequence variant" id="VAR_086438" description="In DYT31." evidence="4">
    <location>
        <begin position="255"/>
        <end position="819"/>
    </location>
</feature>
<feature type="sequence variant" id="VAR_057054" description="In dbSNP:rs16911681.">
    <original>R</original>
    <variation>Q</variation>
    <location>
        <position position="255"/>
    </location>
</feature>
<feature type="sequence variant" id="VAR_086439" description="In DYT31." evidence="4">
    <location>
        <begin position="259"/>
        <end position="819"/>
    </location>
</feature>
<feature type="sequence variant" id="VAR_057055" description="In dbSNP:rs34557833.">
    <original>R</original>
    <variation>C</variation>
    <location>
        <position position="386"/>
    </location>
</feature>
<feature type="sequence variant" id="VAR_086440" description="In DYT31." evidence="4">
    <location>
        <begin position="493"/>
        <end position="819"/>
    </location>
</feature>
<dbReference type="EC" id="3.4.11.-" evidence="1"/>
<dbReference type="EMBL" id="AJ560639">
    <property type="protein sequence ID" value="CAD90259.1"/>
    <property type="molecule type" value="mRNA"/>
</dbReference>
<dbReference type="EMBL" id="AK027581">
    <property type="protein sequence ID" value="BAB55210.1"/>
    <property type="status" value="ALT_INIT"/>
    <property type="molecule type" value="mRNA"/>
</dbReference>
<dbReference type="EMBL" id="AK057450">
    <property type="protein sequence ID" value="BAB71491.1"/>
    <property type="molecule type" value="mRNA"/>
</dbReference>
<dbReference type="EMBL" id="AL157936">
    <property type="status" value="NOT_ANNOTATED_CDS"/>
    <property type="molecule type" value="Genomic_DNA"/>
</dbReference>
<dbReference type="EMBL" id="AL353768">
    <property type="status" value="NOT_ANNOTATED_CDS"/>
    <property type="molecule type" value="Genomic_DNA"/>
</dbReference>
<dbReference type="EMBL" id="AL354893">
    <property type="status" value="NOT_ANNOTATED_CDS"/>
    <property type="molecule type" value="Genomic_DNA"/>
</dbReference>
<dbReference type="EMBL" id="BC020194">
    <property type="protein sequence ID" value="AAH20194.1"/>
    <property type="status" value="ALT_INIT"/>
    <property type="molecule type" value="mRNA"/>
</dbReference>
<dbReference type="EMBL" id="BC029616">
    <property type="protein sequence ID" value="AAH29616.1"/>
    <property type="molecule type" value="mRNA"/>
</dbReference>
<dbReference type="CCDS" id="CCDS55327.1">
    <molecule id="Q8N6M6-3"/>
</dbReference>
<dbReference type="CCDS" id="CCDS55328.1">
    <molecule id="Q8N6M6-1"/>
</dbReference>
<dbReference type="CCDS" id="CCDS6713.1">
    <molecule id="Q8N6M6-2"/>
</dbReference>
<dbReference type="RefSeq" id="NP_001180258.1">
    <molecule id="Q8N6M6-1"/>
    <property type="nucleotide sequence ID" value="NM_001193329.3"/>
</dbReference>
<dbReference type="RefSeq" id="NP_001180260.1">
    <molecule id="Q8N6M6-3"/>
    <property type="nucleotide sequence ID" value="NM_001193331.3"/>
</dbReference>
<dbReference type="RefSeq" id="NP_001373000.1">
    <molecule id="Q8N6M6-3"/>
    <property type="nucleotide sequence ID" value="NM_001386071.1"/>
</dbReference>
<dbReference type="RefSeq" id="NP_001373004.1">
    <molecule id="Q8N6M6-1"/>
    <property type="nucleotide sequence ID" value="NM_001386075.1"/>
</dbReference>
<dbReference type="RefSeq" id="NP_116212.3">
    <molecule id="Q8N6M6-2"/>
    <property type="nucleotide sequence ID" value="NM_032823.5"/>
</dbReference>
<dbReference type="RefSeq" id="XP_006717369.1">
    <property type="nucleotide sequence ID" value="XM_006717306.1"/>
</dbReference>
<dbReference type="RefSeq" id="XP_016870719.1">
    <property type="nucleotide sequence ID" value="XM_017015230.1"/>
</dbReference>
<dbReference type="RefSeq" id="XP_016870720.1">
    <molecule id="Q8N6M6-2"/>
    <property type="nucleotide sequence ID" value="XM_017015231.3"/>
</dbReference>
<dbReference type="RefSeq" id="XP_047279934.1">
    <molecule id="Q8N6M6-1"/>
    <property type="nucleotide sequence ID" value="XM_047423978.1"/>
</dbReference>
<dbReference type="RefSeq" id="XP_054220005.1">
    <molecule id="Q8N6M6-1"/>
    <property type="nucleotide sequence ID" value="XM_054364030.1"/>
</dbReference>
<dbReference type="RefSeq" id="XP_054220013.1">
    <molecule id="Q8N6M6-2"/>
    <property type="nucleotide sequence ID" value="XM_054364038.1"/>
</dbReference>
<dbReference type="SMR" id="Q8N6M6"/>
<dbReference type="BioGRID" id="124346">
    <property type="interactions" value="73"/>
</dbReference>
<dbReference type="FunCoup" id="Q8N6M6">
    <property type="interactions" value="1307"/>
</dbReference>
<dbReference type="IntAct" id="Q8N6M6">
    <property type="interactions" value="19"/>
</dbReference>
<dbReference type="MINT" id="Q8N6M6"/>
<dbReference type="STRING" id="9606.ENSP00000364464"/>
<dbReference type="ChEMBL" id="CHEMBL3831223"/>
<dbReference type="MEROPS" id="M01.028"/>
<dbReference type="iPTMnet" id="Q8N6M6"/>
<dbReference type="PhosphoSitePlus" id="Q8N6M6"/>
<dbReference type="BioMuta" id="C9orf3"/>
<dbReference type="DMDM" id="61211648"/>
<dbReference type="MassIVE" id="Q8N6M6"/>
<dbReference type="PaxDb" id="9606-ENSP00000364464"/>
<dbReference type="PeptideAtlas" id="Q8N6M6"/>
<dbReference type="ProteomicsDB" id="72195">
    <molecule id="Q8N6M6-1"/>
</dbReference>
<dbReference type="ProteomicsDB" id="72196">
    <molecule id="Q8N6M6-2"/>
</dbReference>
<dbReference type="ProteomicsDB" id="72197">
    <molecule id="Q8N6M6-3"/>
</dbReference>
<dbReference type="ProteomicsDB" id="72198">
    <molecule id="Q8N6M6-4"/>
</dbReference>
<dbReference type="Antibodypedia" id="985">
    <property type="antibodies" value="82 antibodies from 18 providers"/>
</dbReference>
<dbReference type="DNASU" id="84909"/>
<dbReference type="Ensembl" id="ENST00000277198.6">
    <molecule id="Q8N6M6-3"/>
    <property type="protein sequence ID" value="ENSP00000277198.2"/>
    <property type="gene ID" value="ENSG00000148120.19"/>
</dbReference>
<dbReference type="Ensembl" id="ENST00000297979.9">
    <molecule id="Q8N6M6-2"/>
    <property type="protein sequence ID" value="ENSP00000297979.5"/>
    <property type="gene ID" value="ENSG00000148120.19"/>
</dbReference>
<dbReference type="Ensembl" id="ENST00000375315.8">
    <molecule id="Q8N6M6-1"/>
    <property type="protein sequence ID" value="ENSP00000364464.2"/>
    <property type="gene ID" value="ENSG00000148120.19"/>
</dbReference>
<dbReference type="GeneID" id="84909"/>
<dbReference type="KEGG" id="hsa:84909"/>
<dbReference type="MANE-Select" id="ENST00000375315.8">
    <property type="protein sequence ID" value="ENSP00000364464.2"/>
    <property type="RefSeq nucleotide sequence ID" value="NM_001193329.3"/>
    <property type="RefSeq protein sequence ID" value="NP_001180258.1"/>
</dbReference>
<dbReference type="UCSC" id="uc004aux.3">
    <molecule id="Q8N6M6-1"/>
    <property type="organism name" value="human"/>
</dbReference>
<dbReference type="AGR" id="HGNC:1361"/>
<dbReference type="CTD" id="84909"/>
<dbReference type="DisGeNET" id="84909"/>
<dbReference type="GeneCards" id="AOPEP"/>
<dbReference type="HGNC" id="HGNC:1361">
    <property type="gene designation" value="AOPEP"/>
</dbReference>
<dbReference type="HPA" id="ENSG00000148120">
    <property type="expression patterns" value="Low tissue specificity"/>
</dbReference>
<dbReference type="MalaCards" id="AOPEP"/>
<dbReference type="MIM" id="619565">
    <property type="type" value="phenotype"/>
</dbReference>
<dbReference type="MIM" id="619600">
    <property type="type" value="gene"/>
</dbReference>
<dbReference type="neXtProt" id="NX_Q8N6M6"/>
<dbReference type="OpenTargets" id="ENSG00000148120"/>
<dbReference type="PharmGKB" id="PA25978"/>
<dbReference type="VEuPathDB" id="HostDB:ENSG00000148120"/>
<dbReference type="eggNOG" id="KOG1047">
    <property type="taxonomic scope" value="Eukaryota"/>
</dbReference>
<dbReference type="GeneTree" id="ENSGT00940000155211"/>
<dbReference type="InParanoid" id="Q8N6M6"/>
<dbReference type="OMA" id="FARCSQA"/>
<dbReference type="OrthoDB" id="79562at2759"/>
<dbReference type="PAN-GO" id="Q8N6M6">
    <property type="GO annotations" value="1 GO annotation based on evolutionary models"/>
</dbReference>
<dbReference type="PhylomeDB" id="Q8N6M6"/>
<dbReference type="TreeFam" id="TF332004"/>
<dbReference type="PathwayCommons" id="Q8N6M6"/>
<dbReference type="SABIO-RK" id="Q8N6M6"/>
<dbReference type="SignaLink" id="Q8N6M6"/>
<dbReference type="BioGRID-ORCS" id="84909">
    <property type="hits" value="11 hits in 1143 CRISPR screens"/>
</dbReference>
<dbReference type="ChiTaRS" id="C9orf3">
    <property type="organism name" value="human"/>
</dbReference>
<dbReference type="GenomeRNAi" id="84909"/>
<dbReference type="Pharos" id="Q8N6M6">
    <property type="development level" value="Tbio"/>
</dbReference>
<dbReference type="PRO" id="PR:Q8N6M6"/>
<dbReference type="Proteomes" id="UP000005640">
    <property type="component" value="Chromosome 9"/>
</dbReference>
<dbReference type="RNAct" id="Q8N6M6">
    <property type="molecule type" value="protein"/>
</dbReference>
<dbReference type="Bgee" id="ENSG00000148120">
    <property type="expression patterns" value="Expressed in apex of heart and 151 other cell types or tissues"/>
</dbReference>
<dbReference type="ExpressionAtlas" id="Q8N6M6">
    <property type="expression patterns" value="baseline and differential"/>
</dbReference>
<dbReference type="GO" id="GO:0005737">
    <property type="term" value="C:cytoplasm"/>
    <property type="evidence" value="ECO:0007669"/>
    <property type="project" value="UniProtKB-SubCell"/>
</dbReference>
<dbReference type="GO" id="GO:0005730">
    <property type="term" value="C:nucleolus"/>
    <property type="evidence" value="ECO:0000250"/>
    <property type="project" value="UniProtKB"/>
</dbReference>
<dbReference type="GO" id="GO:0070006">
    <property type="term" value="F:metalloaminopeptidase activity"/>
    <property type="evidence" value="ECO:0007669"/>
    <property type="project" value="InterPro"/>
</dbReference>
<dbReference type="GO" id="GO:0008270">
    <property type="term" value="F:zinc ion binding"/>
    <property type="evidence" value="ECO:0007669"/>
    <property type="project" value="InterPro"/>
</dbReference>
<dbReference type="GO" id="GO:0006508">
    <property type="term" value="P:proteolysis"/>
    <property type="evidence" value="ECO:0007669"/>
    <property type="project" value="UniProtKB-KW"/>
</dbReference>
<dbReference type="FunFam" id="1.25.40.320:FF:000003">
    <property type="entry name" value="Aminopeptidase O isoform 1"/>
    <property type="match status" value="1"/>
</dbReference>
<dbReference type="FunFam" id="1.10.390.10:FF:000014">
    <property type="entry name" value="aminopeptidase O isoform X1"/>
    <property type="match status" value="1"/>
</dbReference>
<dbReference type="FunFam" id="2.60.40.1730:FF:000008">
    <property type="entry name" value="aminopeptidase O isoform X1"/>
    <property type="match status" value="1"/>
</dbReference>
<dbReference type="FunFam" id="3.30.2010.30:FF:000003">
    <property type="entry name" value="aminopeptidase O isoform X1"/>
    <property type="match status" value="1"/>
</dbReference>
<dbReference type="Gene3D" id="3.30.2010.30">
    <property type="match status" value="1"/>
</dbReference>
<dbReference type="Gene3D" id="1.10.390.10">
    <property type="entry name" value="Neutral Protease Domain 2"/>
    <property type="match status" value="1"/>
</dbReference>
<dbReference type="Gene3D" id="1.25.40.320">
    <property type="entry name" value="Peptidase M1, leukotriene A4 hydrolase/aminopeptidase C-terminal domain"/>
    <property type="match status" value="1"/>
</dbReference>
<dbReference type="Gene3D" id="2.60.40.1730">
    <property type="entry name" value="tricorn interacting facor f3 domain"/>
    <property type="match status" value="1"/>
</dbReference>
<dbReference type="InterPro" id="IPR042097">
    <property type="entry name" value="Aminopeptidase_N-like_N_sf"/>
</dbReference>
<dbReference type="InterPro" id="IPR033577">
    <property type="entry name" value="AOPep"/>
</dbReference>
<dbReference type="InterPro" id="IPR016024">
    <property type="entry name" value="ARM-type_fold"/>
</dbReference>
<dbReference type="InterPro" id="IPR038502">
    <property type="entry name" value="M1_LTA-4_hydro/amino_C_sf"/>
</dbReference>
<dbReference type="InterPro" id="IPR015211">
    <property type="entry name" value="Peptidase_M1_C"/>
</dbReference>
<dbReference type="InterPro" id="IPR014782">
    <property type="entry name" value="Peptidase_M1_dom"/>
</dbReference>
<dbReference type="InterPro" id="IPR027268">
    <property type="entry name" value="Peptidase_M4/M1_CTD_sf"/>
</dbReference>
<dbReference type="PANTHER" id="PTHR46627">
    <property type="entry name" value="AMINOPEPTIDASE O"/>
    <property type="match status" value="1"/>
</dbReference>
<dbReference type="PANTHER" id="PTHR46627:SF1">
    <property type="entry name" value="AMINOPEPTIDASE O"/>
    <property type="match status" value="1"/>
</dbReference>
<dbReference type="Pfam" id="PF09127">
    <property type="entry name" value="Leuk-A4-hydro_C"/>
    <property type="match status" value="1"/>
</dbReference>
<dbReference type="Pfam" id="PF01433">
    <property type="entry name" value="Peptidase_M1"/>
    <property type="match status" value="1"/>
</dbReference>
<dbReference type="SMART" id="SM01263">
    <property type="entry name" value="Leuk-A4-hydro_C"/>
    <property type="match status" value="1"/>
</dbReference>
<dbReference type="SUPFAM" id="SSF48371">
    <property type="entry name" value="ARM repeat"/>
    <property type="match status" value="1"/>
</dbReference>
<dbReference type="SUPFAM" id="SSF63737">
    <property type="entry name" value="Leukotriene A4 hydrolase N-terminal domain"/>
    <property type="match status" value="1"/>
</dbReference>
<dbReference type="SUPFAM" id="SSF55486">
    <property type="entry name" value="Metalloproteases ('zincins'), catalytic domain"/>
    <property type="match status" value="1"/>
</dbReference>
<evidence type="ECO:0000250" key="1">
    <source>
        <dbReference type="UniProtKB" id="P15144"/>
    </source>
</evidence>
<evidence type="ECO:0000250" key="2">
    <source>
        <dbReference type="UniProtKB" id="Q8BXQ6"/>
    </source>
</evidence>
<evidence type="ECO:0000255" key="3">
    <source>
        <dbReference type="PROSITE-ProRule" id="PRU10095"/>
    </source>
</evidence>
<evidence type="ECO:0000269" key="4">
    <source>
    </source>
</evidence>
<evidence type="ECO:0000303" key="5">
    <source>
    </source>
</evidence>
<evidence type="ECO:0000303" key="6">
    <source>
    </source>
</evidence>
<evidence type="ECO:0000305" key="7"/>
<evidence type="ECO:0000305" key="8">
    <source>
    </source>
</evidence>
<evidence type="ECO:0000305" key="9">
    <source>
    </source>
</evidence>
<evidence type="ECO:0000312" key="10">
    <source>
        <dbReference type="HGNC" id="HGNC:1361"/>
    </source>
</evidence>
<protein>
    <recommendedName>
        <fullName evidence="7">Aminopeptidase O</fullName>
        <shortName>AP-O</shortName>
        <ecNumber evidence="1">3.4.11.-</ecNumber>
    </recommendedName>
</protein>
<accession>Q8N6M6</accession>
<accession>Q5T9B1</accession>
<accession>Q5T9B3</accession>
<accession>Q5T9B4</accession>
<accession>Q8WUL6</accession>
<accession>Q96M23</accession>
<accession>Q96SS1</accession>
<proteinExistence type="evidence at protein level"/>
<sequence length="819" mass="93572">MDIQLDPARDDLPLMANTSHILVKHYVLDLDVDFESQVIEGTIVLFLEDGNRFKKQNSSIEEACQSESNKACKFGMPEPCHIPVTNARTFSSEMEYNDFAICSKGEKDTSDKDGNHDNQEHASGISSSKYCCDTGNHGSEDFLLVLDCCDLSVLKVEEVDVAAVPGLEKFTRSPELTVVSEEFRNQIVRELVTLPANRWREQLDYYARCSQAPGCGELLFDTDTWSLQIRKTGAQTATDFPHAIRIWYKTKPEGRSVTWTSDQSGRPCVYTVGSPINNRALFPCQEPPVAMSTWQATVRAAASFVVLMSGENSAKPTQLWEECSSWYYYVTMPMPASTFTIAVGCWTEMKMETWSSNDLATERPFSPSEANFRHVGVCSHMEYPCRFQNASATTQEIIPHRVFAPVCLTGACQETLLRLIPPCLSAAHSVLGAHPFSRLDVLIVPANFPSLGMASPHIMFLSQSILTGGNHLCGTRLCHEIAHAWFGLAIGARDWTEEWLSEGFATHLEDVFWATAQQLAPYEAREQQELRACLRWRRLQDEMQCSPEEMQVLRPSKDKTGHTSDSGASVIKHGLNPEKIFMQVHYLKGYFLLRFLAKRLGDETYFSFLRKFVHTFHGQLILSQDFLQMLLENIPEEKRLELSVENIYQDWLESSGIPKPLQRERRAGAECGLARQVRAEVTKWIGVNRRPRKRKRREKEEVFEKLLPDQLVLLLEHLLEQKTLSPRTLQSLQRTYHLQDQDAEVRHRWCELIVKHKFTKAYKSVERFLQEDQAMGVYLYGELMVSEDARQQQLARRCFERTKEQMDRSSAQVVAEMLF</sequence>
<reference key="1">
    <citation type="journal article" date="2004" name="Nat. Genet.">
        <title>Complete sequencing and characterization of 21,243 full-length human cDNAs.</title>
        <authorList>
            <person name="Ota T."/>
            <person name="Suzuki Y."/>
            <person name="Nishikawa T."/>
            <person name="Otsuki T."/>
            <person name="Sugiyama T."/>
            <person name="Irie R."/>
            <person name="Wakamatsu A."/>
            <person name="Hayashi K."/>
            <person name="Sato H."/>
            <person name="Nagai K."/>
            <person name="Kimura K."/>
            <person name="Makita H."/>
            <person name="Sekine M."/>
            <person name="Obayashi M."/>
            <person name="Nishi T."/>
            <person name="Shibahara T."/>
            <person name="Tanaka T."/>
            <person name="Ishii S."/>
            <person name="Yamamoto J."/>
            <person name="Saito K."/>
            <person name="Kawai Y."/>
            <person name="Isono Y."/>
            <person name="Nakamura Y."/>
            <person name="Nagahari K."/>
            <person name="Murakami K."/>
            <person name="Yasuda T."/>
            <person name="Iwayanagi T."/>
            <person name="Wagatsuma M."/>
            <person name="Shiratori A."/>
            <person name="Sudo H."/>
            <person name="Hosoiri T."/>
            <person name="Kaku Y."/>
            <person name="Kodaira H."/>
            <person name="Kondo H."/>
            <person name="Sugawara M."/>
            <person name="Takahashi M."/>
            <person name="Kanda K."/>
            <person name="Yokoi T."/>
            <person name="Furuya T."/>
            <person name="Kikkawa E."/>
            <person name="Omura Y."/>
            <person name="Abe K."/>
            <person name="Kamihara K."/>
            <person name="Katsuta N."/>
            <person name="Sato K."/>
            <person name="Tanikawa M."/>
            <person name="Yamazaki M."/>
            <person name="Ninomiya K."/>
            <person name="Ishibashi T."/>
            <person name="Yamashita H."/>
            <person name="Murakawa K."/>
            <person name="Fujimori K."/>
            <person name="Tanai H."/>
            <person name="Kimata M."/>
            <person name="Watanabe M."/>
            <person name="Hiraoka S."/>
            <person name="Chiba Y."/>
            <person name="Ishida S."/>
            <person name="Ono Y."/>
            <person name="Takiguchi S."/>
            <person name="Watanabe S."/>
            <person name="Yosida M."/>
            <person name="Hotuta T."/>
            <person name="Kusano J."/>
            <person name="Kanehori K."/>
            <person name="Takahashi-Fujii A."/>
            <person name="Hara H."/>
            <person name="Tanase T.-O."/>
            <person name="Nomura Y."/>
            <person name="Togiya S."/>
            <person name="Komai F."/>
            <person name="Hara R."/>
            <person name="Takeuchi K."/>
            <person name="Arita M."/>
            <person name="Imose N."/>
            <person name="Musashino K."/>
            <person name="Yuuki H."/>
            <person name="Oshima A."/>
            <person name="Sasaki N."/>
            <person name="Aotsuka S."/>
            <person name="Yoshikawa Y."/>
            <person name="Matsunawa H."/>
            <person name="Ichihara T."/>
            <person name="Shiohata N."/>
            <person name="Sano S."/>
            <person name="Moriya S."/>
            <person name="Momiyama H."/>
            <person name="Satoh N."/>
            <person name="Takami S."/>
            <person name="Terashima Y."/>
            <person name="Suzuki O."/>
            <person name="Nakagawa S."/>
            <person name="Senoh A."/>
            <person name="Mizoguchi H."/>
            <person name="Goto Y."/>
            <person name="Shimizu F."/>
            <person name="Wakebe H."/>
            <person name="Hishigaki H."/>
            <person name="Watanabe T."/>
            <person name="Sugiyama A."/>
            <person name="Takemoto M."/>
            <person name="Kawakami B."/>
            <person name="Yamazaki M."/>
            <person name="Watanabe K."/>
            <person name="Kumagai A."/>
            <person name="Itakura S."/>
            <person name="Fukuzumi Y."/>
            <person name="Fujimori Y."/>
            <person name="Komiyama M."/>
            <person name="Tashiro H."/>
            <person name="Tanigami A."/>
            <person name="Fujiwara T."/>
            <person name="Ono T."/>
            <person name="Yamada K."/>
            <person name="Fujii Y."/>
            <person name="Ozaki K."/>
            <person name="Hirao M."/>
            <person name="Ohmori Y."/>
            <person name="Kawabata A."/>
            <person name="Hikiji T."/>
            <person name="Kobatake N."/>
            <person name="Inagaki H."/>
            <person name="Ikema Y."/>
            <person name="Okamoto S."/>
            <person name="Okitani R."/>
            <person name="Kawakami T."/>
            <person name="Noguchi S."/>
            <person name="Itoh T."/>
            <person name="Shigeta K."/>
            <person name="Senba T."/>
            <person name="Matsumura K."/>
            <person name="Nakajima Y."/>
            <person name="Mizuno T."/>
            <person name="Morinaga M."/>
            <person name="Sasaki M."/>
            <person name="Togashi T."/>
            <person name="Oyama M."/>
            <person name="Hata H."/>
            <person name="Watanabe M."/>
            <person name="Komatsu T."/>
            <person name="Mizushima-Sugano J."/>
            <person name="Satoh T."/>
            <person name="Shirai Y."/>
            <person name="Takahashi Y."/>
            <person name="Nakagawa K."/>
            <person name="Okumura K."/>
            <person name="Nagase T."/>
            <person name="Nomura N."/>
            <person name="Kikuchi H."/>
            <person name="Masuho Y."/>
            <person name="Yamashita R."/>
            <person name="Nakai K."/>
            <person name="Yada T."/>
            <person name="Nakamura Y."/>
            <person name="Ohara O."/>
            <person name="Isogai T."/>
            <person name="Sugano S."/>
        </authorList>
    </citation>
    <scope>NUCLEOTIDE SEQUENCE [LARGE SCALE MRNA] (ISOFORM 3)</scope>
    <scope>NUCLEOTIDE SEQUENCE [LARGE SCALE MRNA] OF 178-819 (ISOFORM 4)</scope>
    <source>
        <tissue>Teratocarcinoma</tissue>
        <tissue>Testis</tissue>
    </source>
</reference>
<reference key="2">
    <citation type="journal article" date="2004" name="Nature">
        <title>DNA sequence and analysis of human chromosome 9.</title>
        <authorList>
            <person name="Humphray S.J."/>
            <person name="Oliver K."/>
            <person name="Hunt A.R."/>
            <person name="Plumb R.W."/>
            <person name="Loveland J.E."/>
            <person name="Howe K.L."/>
            <person name="Andrews T.D."/>
            <person name="Searle S."/>
            <person name="Hunt S.E."/>
            <person name="Scott C.E."/>
            <person name="Jones M.C."/>
            <person name="Ainscough R."/>
            <person name="Almeida J.P."/>
            <person name="Ambrose K.D."/>
            <person name="Ashwell R.I.S."/>
            <person name="Babbage A.K."/>
            <person name="Babbage S."/>
            <person name="Bagguley C.L."/>
            <person name="Bailey J."/>
            <person name="Banerjee R."/>
            <person name="Barker D.J."/>
            <person name="Barlow K.F."/>
            <person name="Bates K."/>
            <person name="Beasley H."/>
            <person name="Beasley O."/>
            <person name="Bird C.P."/>
            <person name="Bray-Allen S."/>
            <person name="Brown A.J."/>
            <person name="Brown J.Y."/>
            <person name="Burford D."/>
            <person name="Burrill W."/>
            <person name="Burton J."/>
            <person name="Carder C."/>
            <person name="Carter N.P."/>
            <person name="Chapman J.C."/>
            <person name="Chen Y."/>
            <person name="Clarke G."/>
            <person name="Clark S.Y."/>
            <person name="Clee C.M."/>
            <person name="Clegg S."/>
            <person name="Collier R.E."/>
            <person name="Corby N."/>
            <person name="Crosier M."/>
            <person name="Cummings A.T."/>
            <person name="Davies J."/>
            <person name="Dhami P."/>
            <person name="Dunn M."/>
            <person name="Dutta I."/>
            <person name="Dyer L.W."/>
            <person name="Earthrowl M.E."/>
            <person name="Faulkner L."/>
            <person name="Fleming C.J."/>
            <person name="Frankish A."/>
            <person name="Frankland J.A."/>
            <person name="French L."/>
            <person name="Fricker D.G."/>
            <person name="Garner P."/>
            <person name="Garnett J."/>
            <person name="Ghori J."/>
            <person name="Gilbert J.G.R."/>
            <person name="Glison C."/>
            <person name="Grafham D.V."/>
            <person name="Gribble S."/>
            <person name="Griffiths C."/>
            <person name="Griffiths-Jones S."/>
            <person name="Grocock R."/>
            <person name="Guy J."/>
            <person name="Hall R.E."/>
            <person name="Hammond S."/>
            <person name="Harley J.L."/>
            <person name="Harrison E.S.I."/>
            <person name="Hart E.A."/>
            <person name="Heath P.D."/>
            <person name="Henderson C.D."/>
            <person name="Hopkins B.L."/>
            <person name="Howard P.J."/>
            <person name="Howden P.J."/>
            <person name="Huckle E."/>
            <person name="Johnson C."/>
            <person name="Johnson D."/>
            <person name="Joy A.A."/>
            <person name="Kay M."/>
            <person name="Keenan S."/>
            <person name="Kershaw J.K."/>
            <person name="Kimberley A.M."/>
            <person name="King A."/>
            <person name="Knights A."/>
            <person name="Laird G.K."/>
            <person name="Langford C."/>
            <person name="Lawlor S."/>
            <person name="Leongamornlert D.A."/>
            <person name="Leversha M."/>
            <person name="Lloyd C."/>
            <person name="Lloyd D.M."/>
            <person name="Lovell J."/>
            <person name="Martin S."/>
            <person name="Mashreghi-Mohammadi M."/>
            <person name="Matthews L."/>
            <person name="McLaren S."/>
            <person name="McLay K.E."/>
            <person name="McMurray A."/>
            <person name="Milne S."/>
            <person name="Nickerson T."/>
            <person name="Nisbett J."/>
            <person name="Nordsiek G."/>
            <person name="Pearce A.V."/>
            <person name="Peck A.I."/>
            <person name="Porter K.M."/>
            <person name="Pandian R."/>
            <person name="Pelan S."/>
            <person name="Phillimore B."/>
            <person name="Povey S."/>
            <person name="Ramsey Y."/>
            <person name="Rand V."/>
            <person name="Scharfe M."/>
            <person name="Sehra H.K."/>
            <person name="Shownkeen R."/>
            <person name="Sims S.K."/>
            <person name="Skuce C.D."/>
            <person name="Smith M."/>
            <person name="Steward C.A."/>
            <person name="Swarbreck D."/>
            <person name="Sycamore N."/>
            <person name="Tester J."/>
            <person name="Thorpe A."/>
            <person name="Tracey A."/>
            <person name="Tromans A."/>
            <person name="Thomas D.W."/>
            <person name="Wall M."/>
            <person name="Wallis J.M."/>
            <person name="West A.P."/>
            <person name="Whitehead S.L."/>
            <person name="Willey D.L."/>
            <person name="Williams S.A."/>
            <person name="Wilming L."/>
            <person name="Wray P.W."/>
            <person name="Young L."/>
            <person name="Ashurst J.L."/>
            <person name="Coulson A."/>
            <person name="Blocker H."/>
            <person name="Durbin R.M."/>
            <person name="Sulston J.E."/>
            <person name="Hubbard T."/>
            <person name="Jackson M.J."/>
            <person name="Bentley D.R."/>
            <person name="Beck S."/>
            <person name="Rogers J."/>
            <person name="Dunham I."/>
        </authorList>
    </citation>
    <scope>NUCLEOTIDE SEQUENCE [LARGE SCALE GENOMIC DNA]</scope>
</reference>
<reference key="3">
    <citation type="journal article" date="2004" name="Genome Res.">
        <title>The status, quality, and expansion of the NIH full-length cDNA project: the Mammalian Gene Collection (MGC).</title>
        <authorList>
            <consortium name="The MGC Project Team"/>
        </authorList>
    </citation>
    <scope>NUCLEOTIDE SEQUENCE [LARGE SCALE MRNA] (ISOFORM 2)</scope>
    <scope>NUCLEOTIDE SEQUENCE [LARGE SCALE MRNA] OF 219-819 (ISOFORM 1)</scope>
    <source>
        <tissue>Lung</tissue>
        <tissue>Muscle</tissue>
    </source>
</reference>
<reference key="4">
    <citation type="journal article" date="2005" name="J. Biol. Chem.">
        <title>Identification of human aminopeptidase O, a novel metalloprotease with structural similarity to aminopeptidase B and leukotriene A4 hydrolase.</title>
        <authorList>
            <person name="Diaz-Perales A."/>
            <person name="Quesada V."/>
            <person name="Sanchez L.M."/>
            <person name="Ugalde A.P."/>
            <person name="Suarez M.F."/>
            <person name="Fueyo A."/>
            <person name="Lopez-Otin C."/>
        </authorList>
    </citation>
    <scope>RETRACTED PAPER</scope>
    <source>
        <tissue>Brain</tissue>
    </source>
</reference>
<reference key="5">
    <citation type="journal article" date="2019" name="J. Biol. Chem.">
        <authorList>
            <person name="Diaz-Perales A."/>
            <person name="Quesada V."/>
            <person name="Sanchez L.M."/>
            <person name="Ugalde A.P."/>
            <person name="Suarez M.F."/>
            <person name="Fueyo A."/>
            <person name="Lopez-Otin C."/>
        </authorList>
    </citation>
    <scope>RETRACTION NOTICE OF PUBMED:15687497</scope>
</reference>
<reference key="6">
    <citation type="journal article" date="2022" name="Mov. Disord.">
        <title>Biallelic AOPEP loss-of-function variants cause progressive dystonia with prominent limb involvement.</title>
        <authorList>
            <person name="Zech M."/>
            <person name="Kumar K.R."/>
            <person name="Reining S."/>
            <person name="Reunert J."/>
            <person name="Tchan M."/>
            <person name="Riley L.G."/>
            <person name="Drew A.P."/>
            <person name="Adam R.J."/>
            <person name="Berutti R."/>
            <person name="Biskup S."/>
            <person name="Derive N."/>
            <person name="Bakhtiari S."/>
            <person name="Jin S.C."/>
            <person name="Kruer M.C."/>
            <person name="Bardakjian T."/>
            <person name="Gonzalez-Alegre P."/>
            <person name="Keller Sarmiento I.J."/>
            <person name="Mencacci N.E."/>
            <person name="Lubbe S.J."/>
            <person name="Kurian M.A."/>
            <person name="Clot F."/>
            <person name="Meneret A."/>
            <person name="de Sainte Agathe J.M."/>
            <person name="Fung V.S.C."/>
            <person name="Vidailhet M."/>
            <person name="Baumann M."/>
            <person name="Marquardt T."/>
            <person name="Winkelmann J."/>
            <person name="Boesch S."/>
        </authorList>
    </citation>
    <scope>VARIANTS DYT31 255-ARG--PHE-819 DEL; 259-TRP--PHE-819 DEL AND 493-ARG--PHE-819 DEL</scope>
    <scope>INVOLVEMENT IN DYT31</scope>
</reference>
<gene>
    <name evidence="10" type="primary">AOPEP</name>
    <name type="synonym">C9orf3</name>
    <name type="synonym">ONPEP</name>
</gene>